<sequence length="104" mass="11692">MAAGHGHEHGHEHGHGHGKMELPDYRQWKIEGTPLETVQKKLAARGLRDPWARNEAWRYMGGFAGNITFPSVILKGFKWGFAAFVVALGAEYFLDSQNGDKKHH</sequence>
<protein>
    <recommendedName>
        <fullName>NADH dehydrogenase [ubiquinone] 1 beta subcomplex subunit 3</fullName>
    </recommendedName>
    <alternativeName>
        <fullName>Complex I-B12</fullName>
        <shortName>CI-B12</shortName>
    </alternativeName>
    <alternativeName>
        <fullName>NADH-ubiquinone oxidoreductase B12 subunit</fullName>
    </alternativeName>
</protein>
<comment type="function">
    <text evidence="5">Accessory subunit of the mitochondrial membrane respiratory chain NADH dehydrogenase (Complex I), that is believed not to be involved in catalysis. Complex I functions in the transfer of electrons from NADH to the respiratory chain. The immediate electron acceptor for the enzyme is believed to be ubiquinone.</text>
</comment>
<comment type="subunit">
    <text evidence="5">Complex I is composed of 45 different subunits.</text>
</comment>
<comment type="subcellular location">
    <subcellularLocation>
        <location evidence="5">Mitochondrion inner membrane</location>
        <topology evidence="1">Single-pass membrane protein</topology>
        <orientation evidence="1">Matrix side</orientation>
    </subcellularLocation>
</comment>
<comment type="PTM">
    <text evidence="1">Methylation at His residues by METTL9 enhances complex I-mediated mitochondrial respiration.</text>
</comment>
<comment type="similarity">
    <text evidence="6">Belongs to the complex I NDUFB3 subunit family.</text>
</comment>
<keyword id="KW-0002">3D-structure</keyword>
<keyword id="KW-0007">Acetylation</keyword>
<keyword id="KW-0903">Direct protein sequencing</keyword>
<keyword id="KW-0249">Electron transport</keyword>
<keyword id="KW-0472">Membrane</keyword>
<keyword id="KW-0488">Methylation</keyword>
<keyword id="KW-0496">Mitochondrion</keyword>
<keyword id="KW-0999">Mitochondrion inner membrane</keyword>
<keyword id="KW-1185">Reference proteome</keyword>
<keyword id="KW-0679">Respiratory chain</keyword>
<keyword id="KW-0812">Transmembrane</keyword>
<keyword id="KW-1133">Transmembrane helix</keyword>
<keyword id="KW-0813">Transport</keyword>
<feature type="initiator methionine" description="Removed" evidence="2">
    <location>
        <position position="1"/>
    </location>
</feature>
<feature type="chain" id="PRO_0000118798" description="NADH dehydrogenase [ubiquinone] 1 beta subcomplex subunit 3">
    <location>
        <begin position="2"/>
        <end position="104"/>
    </location>
</feature>
<feature type="transmembrane region" description="Helical" evidence="3">
    <location>
        <begin position="72"/>
        <end position="90"/>
    </location>
</feature>
<feature type="region of interest" description="Disordered" evidence="4">
    <location>
        <begin position="1"/>
        <end position="20"/>
    </location>
</feature>
<feature type="modified residue" description="N-acetylalanine" evidence="2">
    <location>
        <position position="2"/>
    </location>
</feature>
<feature type="modified residue" description="Pros-methylhistidine" evidence="1">
    <location>
        <position position="11"/>
    </location>
</feature>
<feature type="modified residue" description="Pros-methylhistidine" evidence="1">
    <location>
        <position position="13"/>
    </location>
</feature>
<feature type="modified residue" description="Pros-methylhistidine" evidence="1">
    <location>
        <position position="15"/>
    </location>
</feature>
<feature type="modified residue" description="N6-acetyllysine; alternate" evidence="8">
    <location>
        <position position="29"/>
    </location>
</feature>
<feature type="modified residue" description="N6-succinyllysine; alternate" evidence="9">
    <location>
        <position position="29"/>
    </location>
</feature>
<feature type="modified residue" description="N6-acetyllysine; alternate" evidence="8">
    <location>
        <position position="40"/>
    </location>
</feature>
<feature type="modified residue" description="N6-succinyllysine; alternate" evidence="9">
    <location>
        <position position="40"/>
    </location>
</feature>
<feature type="helix" evidence="10">
    <location>
        <begin position="25"/>
        <end position="27"/>
    </location>
</feature>
<feature type="strand" evidence="11">
    <location>
        <begin position="31"/>
        <end position="33"/>
    </location>
</feature>
<feature type="helix" evidence="10">
    <location>
        <begin position="34"/>
        <end position="44"/>
    </location>
</feature>
<feature type="helix" evidence="10">
    <location>
        <begin position="52"/>
        <end position="59"/>
    </location>
</feature>
<feature type="helix" evidence="10">
    <location>
        <begin position="61"/>
        <end position="63"/>
    </location>
</feature>
<feature type="helix" evidence="10">
    <location>
        <begin position="69"/>
        <end position="73"/>
    </location>
</feature>
<feature type="turn" evidence="10">
    <location>
        <begin position="74"/>
        <end position="76"/>
    </location>
</feature>
<feature type="helix" evidence="10">
    <location>
        <begin position="77"/>
        <end position="94"/>
    </location>
</feature>
<evidence type="ECO:0000250" key="1">
    <source>
        <dbReference type="UniProtKB" id="O43676"/>
    </source>
</evidence>
<evidence type="ECO:0000250" key="2">
    <source>
        <dbReference type="UniProtKB" id="Q02365"/>
    </source>
</evidence>
<evidence type="ECO:0000255" key="3"/>
<evidence type="ECO:0000256" key="4">
    <source>
        <dbReference type="SAM" id="MobiDB-lite"/>
    </source>
</evidence>
<evidence type="ECO:0000269" key="5">
    <source>
    </source>
</evidence>
<evidence type="ECO:0000305" key="6"/>
<evidence type="ECO:0007744" key="7">
    <source>
        <dbReference type="PDB" id="8PW5"/>
    </source>
</evidence>
<evidence type="ECO:0007744" key="8">
    <source>
    </source>
</evidence>
<evidence type="ECO:0007744" key="9">
    <source>
    </source>
</evidence>
<evidence type="ECO:0007829" key="10">
    <source>
        <dbReference type="PDB" id="8OM1"/>
    </source>
</evidence>
<evidence type="ECO:0007829" key="11">
    <source>
        <dbReference type="PDB" id="8RGR"/>
    </source>
</evidence>
<reference key="1">
    <citation type="journal article" date="2005" name="Science">
        <title>The transcriptional landscape of the mammalian genome.</title>
        <authorList>
            <person name="Carninci P."/>
            <person name="Kasukawa T."/>
            <person name="Katayama S."/>
            <person name="Gough J."/>
            <person name="Frith M.C."/>
            <person name="Maeda N."/>
            <person name="Oyama R."/>
            <person name="Ravasi T."/>
            <person name="Lenhard B."/>
            <person name="Wells C."/>
            <person name="Kodzius R."/>
            <person name="Shimokawa K."/>
            <person name="Bajic V.B."/>
            <person name="Brenner S.E."/>
            <person name="Batalov S."/>
            <person name="Forrest A.R."/>
            <person name="Zavolan M."/>
            <person name="Davis M.J."/>
            <person name="Wilming L.G."/>
            <person name="Aidinis V."/>
            <person name="Allen J.E."/>
            <person name="Ambesi-Impiombato A."/>
            <person name="Apweiler R."/>
            <person name="Aturaliya R.N."/>
            <person name="Bailey T.L."/>
            <person name="Bansal M."/>
            <person name="Baxter L."/>
            <person name="Beisel K.W."/>
            <person name="Bersano T."/>
            <person name="Bono H."/>
            <person name="Chalk A.M."/>
            <person name="Chiu K.P."/>
            <person name="Choudhary V."/>
            <person name="Christoffels A."/>
            <person name="Clutterbuck D.R."/>
            <person name="Crowe M.L."/>
            <person name="Dalla E."/>
            <person name="Dalrymple B.P."/>
            <person name="de Bono B."/>
            <person name="Della Gatta G."/>
            <person name="di Bernardo D."/>
            <person name="Down T."/>
            <person name="Engstrom P."/>
            <person name="Fagiolini M."/>
            <person name="Faulkner G."/>
            <person name="Fletcher C.F."/>
            <person name="Fukushima T."/>
            <person name="Furuno M."/>
            <person name="Futaki S."/>
            <person name="Gariboldi M."/>
            <person name="Georgii-Hemming P."/>
            <person name="Gingeras T.R."/>
            <person name="Gojobori T."/>
            <person name="Green R.E."/>
            <person name="Gustincich S."/>
            <person name="Harbers M."/>
            <person name="Hayashi Y."/>
            <person name="Hensch T.K."/>
            <person name="Hirokawa N."/>
            <person name="Hill D."/>
            <person name="Huminiecki L."/>
            <person name="Iacono M."/>
            <person name="Ikeo K."/>
            <person name="Iwama A."/>
            <person name="Ishikawa T."/>
            <person name="Jakt M."/>
            <person name="Kanapin A."/>
            <person name="Katoh M."/>
            <person name="Kawasawa Y."/>
            <person name="Kelso J."/>
            <person name="Kitamura H."/>
            <person name="Kitano H."/>
            <person name="Kollias G."/>
            <person name="Krishnan S.P."/>
            <person name="Kruger A."/>
            <person name="Kummerfeld S.K."/>
            <person name="Kurochkin I.V."/>
            <person name="Lareau L.F."/>
            <person name="Lazarevic D."/>
            <person name="Lipovich L."/>
            <person name="Liu J."/>
            <person name="Liuni S."/>
            <person name="McWilliam S."/>
            <person name="Madan Babu M."/>
            <person name="Madera M."/>
            <person name="Marchionni L."/>
            <person name="Matsuda H."/>
            <person name="Matsuzawa S."/>
            <person name="Miki H."/>
            <person name="Mignone F."/>
            <person name="Miyake S."/>
            <person name="Morris K."/>
            <person name="Mottagui-Tabar S."/>
            <person name="Mulder N."/>
            <person name="Nakano N."/>
            <person name="Nakauchi H."/>
            <person name="Ng P."/>
            <person name="Nilsson R."/>
            <person name="Nishiguchi S."/>
            <person name="Nishikawa S."/>
            <person name="Nori F."/>
            <person name="Ohara O."/>
            <person name="Okazaki Y."/>
            <person name="Orlando V."/>
            <person name="Pang K.C."/>
            <person name="Pavan W.J."/>
            <person name="Pavesi G."/>
            <person name="Pesole G."/>
            <person name="Petrovsky N."/>
            <person name="Piazza S."/>
            <person name="Reed J."/>
            <person name="Reid J.F."/>
            <person name="Ring B.Z."/>
            <person name="Ringwald M."/>
            <person name="Rost B."/>
            <person name="Ruan Y."/>
            <person name="Salzberg S.L."/>
            <person name="Sandelin A."/>
            <person name="Schneider C."/>
            <person name="Schoenbach C."/>
            <person name="Sekiguchi K."/>
            <person name="Semple C.A."/>
            <person name="Seno S."/>
            <person name="Sessa L."/>
            <person name="Sheng Y."/>
            <person name="Shibata Y."/>
            <person name="Shimada H."/>
            <person name="Shimada K."/>
            <person name="Silva D."/>
            <person name="Sinclair B."/>
            <person name="Sperling S."/>
            <person name="Stupka E."/>
            <person name="Sugiura K."/>
            <person name="Sultana R."/>
            <person name="Takenaka Y."/>
            <person name="Taki K."/>
            <person name="Tammoja K."/>
            <person name="Tan S.L."/>
            <person name="Tang S."/>
            <person name="Taylor M.S."/>
            <person name="Tegner J."/>
            <person name="Teichmann S.A."/>
            <person name="Ueda H.R."/>
            <person name="van Nimwegen E."/>
            <person name="Verardo R."/>
            <person name="Wei C.L."/>
            <person name="Yagi K."/>
            <person name="Yamanishi H."/>
            <person name="Zabarovsky E."/>
            <person name="Zhu S."/>
            <person name="Zimmer A."/>
            <person name="Hide W."/>
            <person name="Bult C."/>
            <person name="Grimmond S.M."/>
            <person name="Teasdale R.D."/>
            <person name="Liu E.T."/>
            <person name="Brusic V."/>
            <person name="Quackenbush J."/>
            <person name="Wahlestedt C."/>
            <person name="Mattick J.S."/>
            <person name="Hume D.A."/>
            <person name="Kai C."/>
            <person name="Sasaki D."/>
            <person name="Tomaru Y."/>
            <person name="Fukuda S."/>
            <person name="Kanamori-Katayama M."/>
            <person name="Suzuki M."/>
            <person name="Aoki J."/>
            <person name="Arakawa T."/>
            <person name="Iida J."/>
            <person name="Imamura K."/>
            <person name="Itoh M."/>
            <person name="Kato T."/>
            <person name="Kawaji H."/>
            <person name="Kawagashira N."/>
            <person name="Kawashima T."/>
            <person name="Kojima M."/>
            <person name="Kondo S."/>
            <person name="Konno H."/>
            <person name="Nakano K."/>
            <person name="Ninomiya N."/>
            <person name="Nishio T."/>
            <person name="Okada M."/>
            <person name="Plessy C."/>
            <person name="Shibata K."/>
            <person name="Shiraki T."/>
            <person name="Suzuki S."/>
            <person name="Tagami M."/>
            <person name="Waki K."/>
            <person name="Watahiki A."/>
            <person name="Okamura-Oho Y."/>
            <person name="Suzuki H."/>
            <person name="Kawai J."/>
            <person name="Hayashizaki Y."/>
        </authorList>
    </citation>
    <scope>NUCLEOTIDE SEQUENCE [LARGE SCALE MRNA]</scope>
    <source>
        <strain>C57BL/6J</strain>
        <tissue>Embryo</tissue>
        <tissue>Pancreas</tissue>
        <tissue>Thymus</tissue>
        <tissue>Tongue</tissue>
    </source>
</reference>
<reference key="2">
    <citation type="journal article" date="2004" name="Genome Res.">
        <title>The status, quality, and expansion of the NIH full-length cDNA project: the Mammalian Gene Collection (MGC).</title>
        <authorList>
            <consortium name="The MGC Project Team"/>
        </authorList>
    </citation>
    <scope>NUCLEOTIDE SEQUENCE [LARGE SCALE MRNA]</scope>
    <source>
        <tissue>Colon</tissue>
    </source>
</reference>
<reference key="3">
    <citation type="submission" date="2007-04" db="UniProtKB">
        <authorList>
            <person name="Lubec G."/>
            <person name="Kang S.U."/>
        </authorList>
    </citation>
    <scope>PROTEIN SEQUENCE OF 20-26 AND 30-40</scope>
    <scope>IDENTIFICATION BY MASS SPECTROMETRY</scope>
    <source>
        <strain>C57BL/6J</strain>
        <tissue>Brain</tissue>
    </source>
</reference>
<reference key="4">
    <citation type="journal article" date="2010" name="Cell">
        <title>A tissue-specific atlas of mouse protein phosphorylation and expression.</title>
        <authorList>
            <person name="Huttlin E.L."/>
            <person name="Jedrychowski M.P."/>
            <person name="Elias J.E."/>
            <person name="Goswami T."/>
            <person name="Rad R."/>
            <person name="Beausoleil S.A."/>
            <person name="Villen J."/>
            <person name="Haas W."/>
            <person name="Sowa M.E."/>
            <person name="Gygi S.P."/>
        </authorList>
    </citation>
    <scope>IDENTIFICATION BY MASS SPECTROMETRY [LARGE SCALE ANALYSIS]</scope>
    <source>
        <tissue>Brain</tissue>
        <tissue>Brown adipose tissue</tissue>
        <tissue>Heart</tissue>
        <tissue>Kidney</tissue>
        <tissue>Liver</tissue>
        <tissue>Lung</tissue>
        <tissue>Pancreas</tissue>
        <tissue>Spleen</tissue>
        <tissue>Testis</tissue>
    </source>
</reference>
<reference key="5">
    <citation type="journal article" date="2013" name="Mol. Cell">
        <title>SIRT5-mediated lysine desuccinylation impacts diverse metabolic pathways.</title>
        <authorList>
            <person name="Park J."/>
            <person name="Chen Y."/>
            <person name="Tishkoff D.X."/>
            <person name="Peng C."/>
            <person name="Tan M."/>
            <person name="Dai L."/>
            <person name="Xie Z."/>
            <person name="Zhang Y."/>
            <person name="Zwaans B.M."/>
            <person name="Skinner M.E."/>
            <person name="Lombard D.B."/>
            <person name="Zhao Y."/>
        </authorList>
    </citation>
    <scope>SUCCINYLATION [LARGE SCALE ANALYSIS] AT LYS-29 AND LYS-40</scope>
    <scope>IDENTIFICATION BY MASS SPECTROMETRY [LARGE SCALE ANALYSIS]</scope>
    <source>
        <tissue>Embryonic fibroblast</tissue>
        <tissue>Liver</tissue>
    </source>
</reference>
<reference key="6">
    <citation type="journal article" date="2013" name="Proc. Natl. Acad. Sci. U.S.A.">
        <title>Label-free quantitative proteomics of the lysine acetylome in mitochondria identifies substrates of SIRT3 in metabolic pathways.</title>
        <authorList>
            <person name="Rardin M.J."/>
            <person name="Newman J.C."/>
            <person name="Held J.M."/>
            <person name="Cusack M.P."/>
            <person name="Sorensen D.J."/>
            <person name="Li B."/>
            <person name="Schilling B."/>
            <person name="Mooney S.D."/>
            <person name="Kahn C.R."/>
            <person name="Verdin E."/>
            <person name="Gibson B.W."/>
        </authorList>
    </citation>
    <scope>ACETYLATION [LARGE SCALE ANALYSIS] AT LYS-29 AND LYS-40</scope>
    <scope>IDENTIFICATION BY MASS SPECTROMETRY [LARGE SCALE ANALYSIS]</scope>
    <source>
        <tissue>Liver</tissue>
    </source>
</reference>
<reference evidence="7" key="7">
    <citation type="journal article" date="2024" name="Nat. Struct. Mol. Biol.">
        <title>SCAF1 drives the compositional diversity of mammalian respirasomes.</title>
        <authorList>
            <person name="Vercellino I."/>
            <person name="Sazanov L.A."/>
        </authorList>
    </citation>
    <scope>STRUCTURE BY ELECTRON MICROSCOPY (3.60 ANGSTROMS) IN COMPLEX WITH MITOCHONDRIAL RESPIRATORY SUPERCOMPLEX</scope>
    <scope>FUNCTION</scope>
    <scope>SUBCELLULAR LOCATION</scope>
    <scope>SUBUNIT</scope>
</reference>
<name>NDUB3_MOUSE</name>
<dbReference type="EMBL" id="AK007930">
    <property type="protein sequence ID" value="BAB25357.1"/>
    <property type="molecule type" value="mRNA"/>
</dbReference>
<dbReference type="EMBL" id="AK009008">
    <property type="protein sequence ID" value="BAB26021.1"/>
    <property type="molecule type" value="mRNA"/>
</dbReference>
<dbReference type="EMBL" id="AK012320">
    <property type="protein sequence ID" value="BAB28160.1"/>
    <property type="molecule type" value="mRNA"/>
</dbReference>
<dbReference type="EMBL" id="AK138123">
    <property type="protein sequence ID" value="BAE23555.1"/>
    <property type="molecule type" value="mRNA"/>
</dbReference>
<dbReference type="EMBL" id="BC036989">
    <property type="protein sequence ID" value="AAH36989.1"/>
    <property type="molecule type" value="mRNA"/>
</dbReference>
<dbReference type="CCDS" id="CCDS14977.1"/>
<dbReference type="RefSeq" id="NP_079873.1">
    <property type="nucleotide sequence ID" value="NM_025597.3"/>
</dbReference>
<dbReference type="PDB" id="6G2J">
    <property type="method" value="EM"/>
    <property type="resolution" value="3.30 A"/>
    <property type="chains" value="k=1-104"/>
</dbReference>
<dbReference type="PDB" id="6G72">
    <property type="method" value="EM"/>
    <property type="resolution" value="3.90 A"/>
    <property type="chains" value="k=1-104"/>
</dbReference>
<dbReference type="PDB" id="6ZR2">
    <property type="method" value="EM"/>
    <property type="resolution" value="3.10 A"/>
    <property type="chains" value="k=1-104"/>
</dbReference>
<dbReference type="PDB" id="6ZTQ">
    <property type="method" value="EM"/>
    <property type="resolution" value="3.00 A"/>
    <property type="chains" value="k=1-104"/>
</dbReference>
<dbReference type="PDB" id="7AK5">
    <property type="method" value="EM"/>
    <property type="resolution" value="3.17 A"/>
    <property type="chains" value="k=1-104"/>
</dbReference>
<dbReference type="PDB" id="7AK6">
    <property type="method" value="EM"/>
    <property type="resolution" value="3.82 A"/>
    <property type="chains" value="k=1-104"/>
</dbReference>
<dbReference type="PDB" id="7B93">
    <property type="method" value="EM"/>
    <property type="resolution" value="3.04 A"/>
    <property type="chains" value="k=1-104"/>
</dbReference>
<dbReference type="PDB" id="7PSA">
    <property type="method" value="EM"/>
    <property type="resolution" value="3.40 A"/>
    <property type="chains" value="k=1-104"/>
</dbReference>
<dbReference type="PDB" id="8C2S">
    <property type="method" value="EM"/>
    <property type="resolution" value="3.90 A"/>
    <property type="chains" value="k=1-104"/>
</dbReference>
<dbReference type="PDB" id="8CA3">
    <property type="method" value="EM"/>
    <property type="resolution" value="3.20 A"/>
    <property type="chains" value="k=1-104"/>
</dbReference>
<dbReference type="PDB" id="8CA5">
    <property type="method" value="EM"/>
    <property type="resolution" value="3.90 A"/>
    <property type="chains" value="k=1-104"/>
</dbReference>
<dbReference type="PDB" id="8IAO">
    <property type="method" value="EM"/>
    <property type="resolution" value="4.20 A"/>
    <property type="chains" value="k=1-104"/>
</dbReference>
<dbReference type="PDB" id="8IAQ">
    <property type="method" value="EM"/>
    <property type="resolution" value="3.40 A"/>
    <property type="chains" value="k=1-104"/>
</dbReference>
<dbReference type="PDB" id="8IB4">
    <property type="method" value="EM"/>
    <property type="resolution" value="4.30 A"/>
    <property type="chains" value="k=1-104"/>
</dbReference>
<dbReference type="PDB" id="8IB6">
    <property type="method" value="EM"/>
    <property type="resolution" value="3.30 A"/>
    <property type="chains" value="k=1-104"/>
</dbReference>
<dbReference type="PDB" id="8IB9">
    <property type="method" value="EM"/>
    <property type="resolution" value="4.30 A"/>
    <property type="chains" value="k=1-104"/>
</dbReference>
<dbReference type="PDB" id="8IBB">
    <property type="method" value="EM"/>
    <property type="resolution" value="3.30 A"/>
    <property type="chains" value="k=1-104"/>
</dbReference>
<dbReference type="PDB" id="8IBD">
    <property type="method" value="EM"/>
    <property type="resolution" value="4.20 A"/>
    <property type="chains" value="k=1-104"/>
</dbReference>
<dbReference type="PDB" id="8IBF">
    <property type="method" value="EM"/>
    <property type="resolution" value="3.30 A"/>
    <property type="chains" value="k=1-104"/>
</dbReference>
<dbReference type="PDB" id="8IC2">
    <property type="method" value="EM"/>
    <property type="resolution" value="6.30 A"/>
    <property type="chains" value="k=1-104"/>
</dbReference>
<dbReference type="PDB" id="8IC4">
    <property type="method" value="EM"/>
    <property type="resolution" value="3.20 A"/>
    <property type="chains" value="k=1-104"/>
</dbReference>
<dbReference type="PDB" id="8OLT">
    <property type="method" value="EM"/>
    <property type="resolution" value="2.84 A"/>
    <property type="chains" value="k=1-104"/>
</dbReference>
<dbReference type="PDB" id="8OM1">
    <property type="method" value="EM"/>
    <property type="resolution" value="2.39 A"/>
    <property type="chains" value="k=1-104"/>
</dbReference>
<dbReference type="PDB" id="8PW5">
    <property type="method" value="EM"/>
    <property type="resolution" value="3.60 A"/>
    <property type="chains" value="k1=1-104"/>
</dbReference>
<dbReference type="PDB" id="8PW6">
    <property type="method" value="EM"/>
    <property type="resolution" value="3.30 A"/>
    <property type="chains" value="k1=1-104"/>
</dbReference>
<dbReference type="PDB" id="8PW7">
    <property type="method" value="EM"/>
    <property type="resolution" value="3.50 A"/>
    <property type="chains" value="k1=1-104"/>
</dbReference>
<dbReference type="PDB" id="8RGP">
    <property type="method" value="EM"/>
    <property type="resolution" value="3.00 A"/>
    <property type="chains" value="k=1-104"/>
</dbReference>
<dbReference type="PDB" id="8RGQ">
    <property type="method" value="EM"/>
    <property type="resolution" value="3.00 A"/>
    <property type="chains" value="k=1-104"/>
</dbReference>
<dbReference type="PDB" id="8RGR">
    <property type="method" value="EM"/>
    <property type="resolution" value="2.90 A"/>
    <property type="chains" value="k=1-104"/>
</dbReference>
<dbReference type="PDB" id="8RGT">
    <property type="method" value="EM"/>
    <property type="resolution" value="3.10 A"/>
    <property type="chains" value="k=1-104"/>
</dbReference>
<dbReference type="PDB" id="8UCA">
    <property type="method" value="EM"/>
    <property type="resolution" value="3.70 A"/>
    <property type="chains" value="B3/b3=1-104"/>
</dbReference>
<dbReference type="PDBsum" id="6G2J"/>
<dbReference type="PDBsum" id="6G72"/>
<dbReference type="PDBsum" id="6ZR2"/>
<dbReference type="PDBsum" id="6ZTQ"/>
<dbReference type="PDBsum" id="7AK5"/>
<dbReference type="PDBsum" id="7AK6"/>
<dbReference type="PDBsum" id="7B93"/>
<dbReference type="PDBsum" id="7PSA"/>
<dbReference type="PDBsum" id="8C2S"/>
<dbReference type="PDBsum" id="8CA3"/>
<dbReference type="PDBsum" id="8CA5"/>
<dbReference type="PDBsum" id="8IAO"/>
<dbReference type="PDBsum" id="8IAQ"/>
<dbReference type="PDBsum" id="8IB4"/>
<dbReference type="PDBsum" id="8IB6"/>
<dbReference type="PDBsum" id="8IB9"/>
<dbReference type="PDBsum" id="8IBB"/>
<dbReference type="PDBsum" id="8IBD"/>
<dbReference type="PDBsum" id="8IBF"/>
<dbReference type="PDBsum" id="8IC2"/>
<dbReference type="PDBsum" id="8IC4"/>
<dbReference type="PDBsum" id="8OLT"/>
<dbReference type="PDBsum" id="8OM1"/>
<dbReference type="PDBsum" id="8PW5"/>
<dbReference type="PDBsum" id="8PW6"/>
<dbReference type="PDBsum" id="8PW7"/>
<dbReference type="PDBsum" id="8RGP"/>
<dbReference type="PDBsum" id="8RGQ"/>
<dbReference type="PDBsum" id="8RGR"/>
<dbReference type="PDBsum" id="8RGT"/>
<dbReference type="PDBsum" id="8UCA"/>
<dbReference type="EMDB" id="EMD-11377"/>
<dbReference type="EMDB" id="EMD-11424"/>
<dbReference type="EMDB" id="EMD-11810"/>
<dbReference type="EMDB" id="EMD-11811"/>
<dbReference type="EMDB" id="EMD-12095"/>
<dbReference type="EMDB" id="EMD-13611"/>
<dbReference type="EMDB" id="EMD-16398"/>
<dbReference type="EMDB" id="EMD-16516"/>
<dbReference type="EMDB" id="EMD-16518"/>
<dbReference type="EMDB" id="EMD-16962"/>
<dbReference type="EMDB" id="EMD-16965"/>
<dbReference type="EMDB" id="EMD-17989"/>
<dbReference type="EMDB" id="EMD-17990"/>
<dbReference type="EMDB" id="EMD-17991"/>
<dbReference type="EMDB" id="EMD-19145"/>
<dbReference type="EMDB" id="EMD-19146"/>
<dbReference type="EMDB" id="EMD-19147"/>
<dbReference type="EMDB" id="EMD-19148"/>
<dbReference type="EMDB" id="EMD-35313"/>
<dbReference type="EMDB" id="EMD-35315"/>
<dbReference type="EMDB" id="EMD-35331"/>
<dbReference type="EMDB" id="EMD-35333"/>
<dbReference type="EMDB" id="EMD-35336"/>
<dbReference type="EMDB" id="EMD-35338"/>
<dbReference type="EMDB" id="EMD-35340"/>
<dbReference type="EMDB" id="EMD-35342"/>
<dbReference type="EMDB" id="EMD-35352"/>
<dbReference type="EMDB" id="EMD-35354"/>
<dbReference type="EMDB" id="EMD-42122"/>
<dbReference type="EMDB" id="EMD-4345"/>
<dbReference type="EMDB" id="EMD-4356"/>
<dbReference type="SMR" id="Q9CQZ6"/>
<dbReference type="BioGRID" id="211516">
    <property type="interactions" value="18"/>
</dbReference>
<dbReference type="ComplexPortal" id="CPX-266">
    <property type="entry name" value="Mitochondrial respiratory chain complex I"/>
</dbReference>
<dbReference type="CORUM" id="Q9CQZ6"/>
<dbReference type="FunCoup" id="Q9CQZ6">
    <property type="interactions" value="1366"/>
</dbReference>
<dbReference type="IntAct" id="Q9CQZ6">
    <property type="interactions" value="4"/>
</dbReference>
<dbReference type="STRING" id="10090.ENSMUSP00000027193"/>
<dbReference type="GlyGen" id="Q9CQZ6">
    <property type="glycosylation" value="1 site, 1 O-linked glycan (1 site)"/>
</dbReference>
<dbReference type="iPTMnet" id="Q9CQZ6"/>
<dbReference type="PhosphoSitePlus" id="Q9CQZ6"/>
<dbReference type="SwissPalm" id="Q9CQZ6"/>
<dbReference type="jPOST" id="Q9CQZ6"/>
<dbReference type="PaxDb" id="10090-ENSMUSP00000027193"/>
<dbReference type="PeptideAtlas" id="Q9CQZ6"/>
<dbReference type="ProteomicsDB" id="252798"/>
<dbReference type="Pumba" id="Q9CQZ6"/>
<dbReference type="TopDownProteomics" id="Q9CQZ6"/>
<dbReference type="Antibodypedia" id="34135">
    <property type="antibodies" value="135 antibodies from 27 providers"/>
</dbReference>
<dbReference type="DNASU" id="66495"/>
<dbReference type="Ensembl" id="ENSMUST00000027193.9">
    <property type="protein sequence ID" value="ENSMUSP00000027193.9"/>
    <property type="gene ID" value="ENSMUSG00000026032.9"/>
</dbReference>
<dbReference type="GeneID" id="66495"/>
<dbReference type="KEGG" id="mmu:66495"/>
<dbReference type="UCSC" id="uc007bck.1">
    <property type="organism name" value="mouse"/>
</dbReference>
<dbReference type="AGR" id="MGI:1913745"/>
<dbReference type="CTD" id="4709"/>
<dbReference type="MGI" id="MGI:1913745">
    <property type="gene designation" value="Ndufb3"/>
</dbReference>
<dbReference type="VEuPathDB" id="HostDB:ENSMUSG00000026032"/>
<dbReference type="eggNOG" id="KOG4631">
    <property type="taxonomic scope" value="Eukaryota"/>
</dbReference>
<dbReference type="GeneTree" id="ENSGT00390000010316"/>
<dbReference type="HOGENOM" id="CLU_160226_1_0_1"/>
<dbReference type="InParanoid" id="Q9CQZ6"/>
<dbReference type="OMA" id="YMGGFAH"/>
<dbReference type="OrthoDB" id="521512at2759"/>
<dbReference type="PhylomeDB" id="Q9CQZ6"/>
<dbReference type="TreeFam" id="TF319656"/>
<dbReference type="Reactome" id="R-MMU-611105">
    <property type="pathway name" value="Respiratory electron transport"/>
</dbReference>
<dbReference type="Reactome" id="R-MMU-6799198">
    <property type="pathway name" value="Complex I biogenesis"/>
</dbReference>
<dbReference type="BioGRID-ORCS" id="66495">
    <property type="hits" value="18 hits in 79 CRISPR screens"/>
</dbReference>
<dbReference type="CD-CODE" id="CE726F99">
    <property type="entry name" value="Postsynaptic density"/>
</dbReference>
<dbReference type="ChiTaRS" id="Ndufb3">
    <property type="organism name" value="mouse"/>
</dbReference>
<dbReference type="PRO" id="PR:Q9CQZ6"/>
<dbReference type="Proteomes" id="UP000000589">
    <property type="component" value="Chromosome 1"/>
</dbReference>
<dbReference type="RNAct" id="Q9CQZ6">
    <property type="molecule type" value="protein"/>
</dbReference>
<dbReference type="Bgee" id="ENSMUSG00000026032">
    <property type="expression patterns" value="Expressed in facial nucleus and 270 other cell types or tissues"/>
</dbReference>
<dbReference type="GO" id="GO:0005743">
    <property type="term" value="C:mitochondrial inner membrane"/>
    <property type="evidence" value="ECO:0000314"/>
    <property type="project" value="UniProtKB"/>
</dbReference>
<dbReference type="GO" id="GO:0005739">
    <property type="term" value="C:mitochondrion"/>
    <property type="evidence" value="ECO:0007005"/>
    <property type="project" value="MGI"/>
</dbReference>
<dbReference type="GO" id="GO:0045271">
    <property type="term" value="C:respiratory chain complex I"/>
    <property type="evidence" value="ECO:0000314"/>
    <property type="project" value="UniProtKB"/>
</dbReference>
<dbReference type="GO" id="GO:0009060">
    <property type="term" value="P:aerobic respiration"/>
    <property type="evidence" value="ECO:0000303"/>
    <property type="project" value="ComplexPortal"/>
</dbReference>
<dbReference type="GO" id="GO:0022900">
    <property type="term" value="P:electron transport chain"/>
    <property type="evidence" value="ECO:0007669"/>
    <property type="project" value="InterPro"/>
</dbReference>
<dbReference type="GO" id="GO:0042776">
    <property type="term" value="P:proton motive force-driven mitochondrial ATP synthesis"/>
    <property type="evidence" value="ECO:0000303"/>
    <property type="project" value="ComplexPortal"/>
</dbReference>
<dbReference type="InterPro" id="IPR012576">
    <property type="entry name" value="NDUFB3"/>
</dbReference>
<dbReference type="PANTHER" id="PTHR15082:SF2">
    <property type="entry name" value="NADH DEHYDROGENASE [UBIQUINONE] 1 BETA SUBCOMPLEX SUBUNIT 3"/>
    <property type="match status" value="1"/>
</dbReference>
<dbReference type="PANTHER" id="PTHR15082">
    <property type="entry name" value="NADH-UBIQUINONE OXIDOREDUCTASE B12 SUBUNIT"/>
    <property type="match status" value="1"/>
</dbReference>
<dbReference type="Pfam" id="PF08122">
    <property type="entry name" value="NDUF_B12"/>
    <property type="match status" value="1"/>
</dbReference>
<accession>Q9CQZ6</accession>
<accession>Q3UUR9</accession>
<proteinExistence type="evidence at protein level"/>
<organism>
    <name type="scientific">Mus musculus</name>
    <name type="common">Mouse</name>
    <dbReference type="NCBI Taxonomy" id="10090"/>
    <lineage>
        <taxon>Eukaryota</taxon>
        <taxon>Metazoa</taxon>
        <taxon>Chordata</taxon>
        <taxon>Craniata</taxon>
        <taxon>Vertebrata</taxon>
        <taxon>Euteleostomi</taxon>
        <taxon>Mammalia</taxon>
        <taxon>Eutheria</taxon>
        <taxon>Euarchontoglires</taxon>
        <taxon>Glires</taxon>
        <taxon>Rodentia</taxon>
        <taxon>Myomorpha</taxon>
        <taxon>Muroidea</taxon>
        <taxon>Muridae</taxon>
        <taxon>Murinae</taxon>
        <taxon>Mus</taxon>
        <taxon>Mus</taxon>
    </lineage>
</organism>
<gene>
    <name type="primary">Ndufb3</name>
</gene>